<evidence type="ECO:0000255" key="1">
    <source>
        <dbReference type="HAMAP-Rule" id="MF_03008"/>
    </source>
</evidence>
<organism>
    <name type="scientific">Bombyx mori</name>
    <name type="common">Silk moth</name>
    <dbReference type="NCBI Taxonomy" id="7091"/>
    <lineage>
        <taxon>Eukaryota</taxon>
        <taxon>Metazoa</taxon>
        <taxon>Ecdysozoa</taxon>
        <taxon>Arthropoda</taxon>
        <taxon>Hexapoda</taxon>
        <taxon>Insecta</taxon>
        <taxon>Pterygota</taxon>
        <taxon>Neoptera</taxon>
        <taxon>Endopterygota</taxon>
        <taxon>Lepidoptera</taxon>
        <taxon>Glossata</taxon>
        <taxon>Ditrysia</taxon>
        <taxon>Bombycoidea</taxon>
        <taxon>Bombycidae</taxon>
        <taxon>Bombycinae</taxon>
        <taxon>Bombyx</taxon>
    </lineage>
</organism>
<reference key="1">
    <citation type="submission" date="2006-03" db="EMBL/GenBank/DDBJ databases">
        <title>Blast silkworm EST database for functional genes.</title>
        <authorList>
            <person name="Niu B.L."/>
            <person name="Meng Z.Q."/>
            <person name="Weng H.B."/>
            <person name="Shen W.F."/>
            <person name="He L.H."/>
            <person name="Zheng K.F."/>
            <person name="Ye S.T."/>
            <person name="Lin T.B."/>
            <person name="Chen J.E."/>
        </authorList>
    </citation>
    <scope>NUCLEOTIDE SEQUENCE [LARGE SCALE MRNA]</scope>
</reference>
<proteinExistence type="evidence at transcript level"/>
<dbReference type="EMBL" id="DQ443288">
    <property type="protein sequence ID" value="ABF51377.1"/>
    <property type="molecule type" value="mRNA"/>
</dbReference>
<dbReference type="RefSeq" id="NP_001040433.1">
    <property type="nucleotide sequence ID" value="NM_001046968.1"/>
</dbReference>
<dbReference type="SMR" id="Q1HPW4"/>
<dbReference type="FunCoup" id="Q1HPW4">
    <property type="interactions" value="1341"/>
</dbReference>
<dbReference type="STRING" id="7091.Q1HPW4"/>
<dbReference type="PaxDb" id="7091-BGIBMGA007889-TA"/>
<dbReference type="EnsemblMetazoa" id="NM_001046968.1">
    <property type="protein sequence ID" value="NP_001040433.1"/>
    <property type="gene ID" value="GeneID_732970"/>
</dbReference>
<dbReference type="GeneID" id="732970"/>
<dbReference type="KEGG" id="bmor:732970"/>
<dbReference type="CTD" id="8668"/>
<dbReference type="eggNOG" id="KOG0643">
    <property type="taxonomic scope" value="Eukaryota"/>
</dbReference>
<dbReference type="HOGENOM" id="CLU_043845_0_1_1"/>
<dbReference type="InParanoid" id="Q1HPW4"/>
<dbReference type="OrthoDB" id="146764at7088"/>
<dbReference type="Proteomes" id="UP000005204">
    <property type="component" value="Unassembled WGS sequence"/>
</dbReference>
<dbReference type="GO" id="GO:0016282">
    <property type="term" value="C:eukaryotic 43S preinitiation complex"/>
    <property type="evidence" value="ECO:0007669"/>
    <property type="project" value="UniProtKB-UniRule"/>
</dbReference>
<dbReference type="GO" id="GO:0033290">
    <property type="term" value="C:eukaryotic 48S preinitiation complex"/>
    <property type="evidence" value="ECO:0007669"/>
    <property type="project" value="UniProtKB-UniRule"/>
</dbReference>
<dbReference type="GO" id="GO:0071541">
    <property type="term" value="C:eukaryotic translation initiation factor 3 complex, eIF3m"/>
    <property type="evidence" value="ECO:0007669"/>
    <property type="project" value="TreeGrafter"/>
</dbReference>
<dbReference type="GO" id="GO:0003723">
    <property type="term" value="F:RNA binding"/>
    <property type="evidence" value="ECO:0007669"/>
    <property type="project" value="TreeGrafter"/>
</dbReference>
<dbReference type="GO" id="GO:0003743">
    <property type="term" value="F:translation initiation factor activity"/>
    <property type="evidence" value="ECO:0007669"/>
    <property type="project" value="UniProtKB-UniRule"/>
</dbReference>
<dbReference type="GO" id="GO:0001732">
    <property type="term" value="P:formation of cytoplasmic translation initiation complex"/>
    <property type="evidence" value="ECO:0007669"/>
    <property type="project" value="UniProtKB-UniRule"/>
</dbReference>
<dbReference type="FunFam" id="2.130.10.10:FF:000127">
    <property type="entry name" value="Eukaryotic translation initiation factor 3 subunit I"/>
    <property type="match status" value="1"/>
</dbReference>
<dbReference type="Gene3D" id="2.130.10.10">
    <property type="entry name" value="YVTN repeat-like/Quinoprotein amine dehydrogenase"/>
    <property type="match status" value="1"/>
</dbReference>
<dbReference type="HAMAP" id="MF_03008">
    <property type="entry name" value="eIF3i"/>
    <property type="match status" value="1"/>
</dbReference>
<dbReference type="InterPro" id="IPR027525">
    <property type="entry name" value="eIF3i"/>
</dbReference>
<dbReference type="InterPro" id="IPR015943">
    <property type="entry name" value="WD40/YVTN_repeat-like_dom_sf"/>
</dbReference>
<dbReference type="InterPro" id="IPR019775">
    <property type="entry name" value="WD40_repeat_CS"/>
</dbReference>
<dbReference type="InterPro" id="IPR036322">
    <property type="entry name" value="WD40_repeat_dom_sf"/>
</dbReference>
<dbReference type="InterPro" id="IPR001680">
    <property type="entry name" value="WD40_rpt"/>
</dbReference>
<dbReference type="PANTHER" id="PTHR19877">
    <property type="entry name" value="EUKARYOTIC TRANSLATION INITIATION FACTOR 3 SUBUNIT I"/>
    <property type="match status" value="1"/>
</dbReference>
<dbReference type="PANTHER" id="PTHR19877:SF1">
    <property type="entry name" value="EUKARYOTIC TRANSLATION INITIATION FACTOR 3 SUBUNIT I"/>
    <property type="match status" value="1"/>
</dbReference>
<dbReference type="Pfam" id="PF24805">
    <property type="entry name" value="EIF3I"/>
    <property type="match status" value="1"/>
</dbReference>
<dbReference type="SMART" id="SM00320">
    <property type="entry name" value="WD40"/>
    <property type="match status" value="5"/>
</dbReference>
<dbReference type="SUPFAM" id="SSF50978">
    <property type="entry name" value="WD40 repeat-like"/>
    <property type="match status" value="1"/>
</dbReference>
<dbReference type="PROSITE" id="PS00678">
    <property type="entry name" value="WD_REPEATS_1"/>
    <property type="match status" value="1"/>
</dbReference>
<dbReference type="PROSITE" id="PS50082">
    <property type="entry name" value="WD_REPEATS_2"/>
    <property type="match status" value="4"/>
</dbReference>
<dbReference type="PROSITE" id="PS50294">
    <property type="entry name" value="WD_REPEATS_REGION"/>
    <property type="match status" value="2"/>
</dbReference>
<keyword id="KW-0963">Cytoplasm</keyword>
<keyword id="KW-0396">Initiation factor</keyword>
<keyword id="KW-0648">Protein biosynthesis</keyword>
<keyword id="KW-1185">Reference proteome</keyword>
<keyword id="KW-0677">Repeat</keyword>
<keyword id="KW-0853">WD repeat</keyword>
<feature type="chain" id="PRO_0000365340" description="Eukaryotic translation initiation factor 3 subunit I">
    <location>
        <begin position="1"/>
        <end position="329"/>
    </location>
</feature>
<feature type="repeat" description="WD 1">
    <location>
        <begin position="8"/>
        <end position="47"/>
    </location>
</feature>
<feature type="repeat" description="WD 2">
    <location>
        <begin position="50"/>
        <end position="89"/>
    </location>
</feature>
<feature type="repeat" description="WD 3">
    <location>
        <begin position="145"/>
        <end position="184"/>
    </location>
</feature>
<feature type="repeat" description="WD 4">
    <location>
        <begin position="187"/>
        <end position="226"/>
    </location>
</feature>
<feature type="repeat" description="WD 5">
    <location>
        <begin position="284"/>
        <end position="323"/>
    </location>
</feature>
<name>EIF3I_BOMMO</name>
<accession>Q1HPW4</accession>
<protein>
    <recommendedName>
        <fullName evidence="1">Eukaryotic translation initiation factor 3 subunit I</fullName>
        <shortName evidence="1">eIF3i</shortName>
    </recommendedName>
</protein>
<sequence>MKPLMLQGHQRAITQIKYNREGDLLFSAAKDSKPNVWWSLNGERLGTFNGHGGVIWCLDVDWQSINLITGGGDSSCRLWDLETGKNIATLKSNSSVRTCNFSYSAYQAAYTTDKAMGHPCEVFVIDTRTIDETVSGQAPILKWEITDSKVTSMIWGSLDETIITGHEAGDLIQWDLRTGKKIHSVKEHTHQITDMQLSRDGTMFVTASKDHTAKLFDTNSLELLKEYKTERPVNSAALSPILDHVVLGGGQDAMEVTTTSTRQGKFDARFFHLVFEEEFGRVKGHFGPINSLAFHPDGKSYASGGEDGYVRVHNFDQSYFDYTFDYNRE</sequence>
<comment type="function">
    <text evidence="1">Component of the eukaryotic translation initiation factor 3 (eIF-3) complex, which is involved in protein synthesis of a specialized repertoire of mRNAs and, together with other initiation factors, stimulates binding of mRNA and methionyl-tRNAi to the 40S ribosome. The eIF-3 complex specifically targets and initiates translation of a subset of mRNAs involved in cell proliferation.</text>
</comment>
<comment type="subunit">
    <text evidence="1">Component of the eukaryotic translation initiation factor 3 (eIF-3) complex.</text>
</comment>
<comment type="subcellular location">
    <subcellularLocation>
        <location evidence="1">Cytoplasm</location>
    </subcellularLocation>
</comment>
<comment type="similarity">
    <text evidence="1">Belongs to the eIF-3 subunit I family.</text>
</comment>